<comment type="catalytic activity">
    <reaction evidence="1">
        <text>1-(5-phospho-beta-D-ribosyl)-5-[(5-phospho-beta-D-ribosylamino)methylideneamino]imidazole-4-carboxamide = 5-[(5-phospho-1-deoxy-D-ribulos-1-ylimino)methylamino]-1-(5-phospho-beta-D-ribosyl)imidazole-4-carboxamide</text>
        <dbReference type="Rhea" id="RHEA:15469"/>
        <dbReference type="ChEBI" id="CHEBI:58435"/>
        <dbReference type="ChEBI" id="CHEBI:58525"/>
        <dbReference type="EC" id="5.3.1.16"/>
    </reaction>
</comment>
<comment type="pathway">
    <text evidence="1">Amino-acid biosynthesis; L-histidine biosynthesis; L-histidine from 5-phospho-alpha-D-ribose 1-diphosphate: step 4/9.</text>
</comment>
<comment type="subcellular location">
    <subcellularLocation>
        <location evidence="1">Cytoplasm</location>
    </subcellularLocation>
</comment>
<comment type="similarity">
    <text evidence="1">Belongs to the HisA/HisF family.</text>
</comment>
<dbReference type="EC" id="5.3.1.16" evidence="1"/>
<dbReference type="EMBL" id="CP000891">
    <property type="protein sequence ID" value="ABX49709.1"/>
    <property type="molecule type" value="Genomic_DNA"/>
</dbReference>
<dbReference type="RefSeq" id="WP_006086290.1">
    <property type="nucleotide sequence ID" value="NC_009997.1"/>
</dbReference>
<dbReference type="SMR" id="A9L4B9"/>
<dbReference type="GeneID" id="11772643"/>
<dbReference type="KEGG" id="sbn:Sbal195_2541"/>
<dbReference type="HOGENOM" id="CLU_048577_1_2_6"/>
<dbReference type="UniPathway" id="UPA00031">
    <property type="reaction ID" value="UER00009"/>
</dbReference>
<dbReference type="Proteomes" id="UP000000770">
    <property type="component" value="Chromosome"/>
</dbReference>
<dbReference type="GO" id="GO:0005737">
    <property type="term" value="C:cytoplasm"/>
    <property type="evidence" value="ECO:0007669"/>
    <property type="project" value="UniProtKB-SubCell"/>
</dbReference>
<dbReference type="GO" id="GO:0003949">
    <property type="term" value="F:1-(5-phosphoribosyl)-5-[(5-phosphoribosylamino)methylideneamino]imidazole-4-carboxamide isomerase activity"/>
    <property type="evidence" value="ECO:0007669"/>
    <property type="project" value="UniProtKB-UniRule"/>
</dbReference>
<dbReference type="GO" id="GO:0000105">
    <property type="term" value="P:L-histidine biosynthetic process"/>
    <property type="evidence" value="ECO:0007669"/>
    <property type="project" value="UniProtKB-UniRule"/>
</dbReference>
<dbReference type="GO" id="GO:0000162">
    <property type="term" value="P:L-tryptophan biosynthetic process"/>
    <property type="evidence" value="ECO:0007669"/>
    <property type="project" value="TreeGrafter"/>
</dbReference>
<dbReference type="CDD" id="cd04732">
    <property type="entry name" value="HisA"/>
    <property type="match status" value="1"/>
</dbReference>
<dbReference type="FunFam" id="3.20.20.70:FF:000009">
    <property type="entry name" value="1-(5-phosphoribosyl)-5-[(5-phosphoribosylamino)methylideneamino] imidazole-4-carboxamide isomerase"/>
    <property type="match status" value="1"/>
</dbReference>
<dbReference type="Gene3D" id="3.20.20.70">
    <property type="entry name" value="Aldolase class I"/>
    <property type="match status" value="1"/>
</dbReference>
<dbReference type="HAMAP" id="MF_01014">
    <property type="entry name" value="HisA"/>
    <property type="match status" value="1"/>
</dbReference>
<dbReference type="InterPro" id="IPR013785">
    <property type="entry name" value="Aldolase_TIM"/>
</dbReference>
<dbReference type="InterPro" id="IPR006062">
    <property type="entry name" value="His_biosynth"/>
</dbReference>
<dbReference type="InterPro" id="IPR006063">
    <property type="entry name" value="HisA_bact_arch"/>
</dbReference>
<dbReference type="InterPro" id="IPR044524">
    <property type="entry name" value="Isoase_HisA-like"/>
</dbReference>
<dbReference type="InterPro" id="IPR023016">
    <property type="entry name" value="Isoase_HisA-like_bact"/>
</dbReference>
<dbReference type="InterPro" id="IPR011060">
    <property type="entry name" value="RibuloseP-bd_barrel"/>
</dbReference>
<dbReference type="NCBIfam" id="TIGR00007">
    <property type="entry name" value="1-(5-phosphoribosyl)-5-[(5-phosphoribosylamino)methylideneamino]imidazole-4-carboxamide isomerase"/>
    <property type="match status" value="1"/>
</dbReference>
<dbReference type="PANTHER" id="PTHR43090">
    <property type="entry name" value="1-(5-PHOSPHORIBOSYL)-5-[(5-PHOSPHORIBOSYLAMINO)METHYLIDENEAMINO] IMIDAZOLE-4-CARBOXAMIDE ISOMERASE"/>
    <property type="match status" value="1"/>
</dbReference>
<dbReference type="PANTHER" id="PTHR43090:SF2">
    <property type="entry name" value="1-(5-PHOSPHORIBOSYL)-5-[(5-PHOSPHORIBOSYLAMINO)METHYLIDENEAMINO] IMIDAZOLE-4-CARBOXAMIDE ISOMERASE"/>
    <property type="match status" value="1"/>
</dbReference>
<dbReference type="Pfam" id="PF00977">
    <property type="entry name" value="His_biosynth"/>
    <property type="match status" value="1"/>
</dbReference>
<dbReference type="SUPFAM" id="SSF51366">
    <property type="entry name" value="Ribulose-phoshate binding barrel"/>
    <property type="match status" value="1"/>
</dbReference>
<gene>
    <name evidence="1" type="primary">hisA</name>
    <name type="ordered locus">Sbal195_2541</name>
</gene>
<sequence length="245" mass="26073">MIIPAIDLIDGNVVRLYQGDYGQQTTFDLSPLAQLQSYEAQGAKWLHIVDLTGAKDPAKRQTRLISQIVAGLNANIQVGGGIRTEEQVTELLNIGVKRVVIGSLAVKEPELVKQWFIKYGSEAICLALDVNINQSGEKIVAVSGWQSGGGKSLESLVETFSAVGLKHALVTDISRDGTLTGANTALYQEIAASYPDIAWQASGGIATLDDVAAVRDSGAAGIIIGKALLINQFNVVEAIQCWPND</sequence>
<protein>
    <recommendedName>
        <fullName evidence="1">1-(5-phosphoribosyl)-5-[(5-phosphoribosylamino)methylideneamino] imidazole-4-carboxamide isomerase</fullName>
        <ecNumber evidence="1">5.3.1.16</ecNumber>
    </recommendedName>
    <alternativeName>
        <fullName evidence="1">Phosphoribosylformimino-5-aminoimidazole carboxamide ribotide isomerase</fullName>
    </alternativeName>
</protein>
<name>HIS4_SHEB9</name>
<evidence type="ECO:0000255" key="1">
    <source>
        <dbReference type="HAMAP-Rule" id="MF_01014"/>
    </source>
</evidence>
<accession>A9L4B9</accession>
<feature type="chain" id="PRO_1000084112" description="1-(5-phosphoribosyl)-5-[(5-phosphoribosylamino)methylideneamino] imidazole-4-carboxamide isomerase">
    <location>
        <begin position="1"/>
        <end position="245"/>
    </location>
</feature>
<feature type="active site" description="Proton acceptor" evidence="1">
    <location>
        <position position="7"/>
    </location>
</feature>
<feature type="active site" description="Proton donor" evidence="1">
    <location>
        <position position="129"/>
    </location>
</feature>
<proteinExistence type="inferred from homology"/>
<reference key="1">
    <citation type="submission" date="2007-11" db="EMBL/GenBank/DDBJ databases">
        <title>Complete sequence of chromosome of Shewanella baltica OS195.</title>
        <authorList>
            <consortium name="US DOE Joint Genome Institute"/>
            <person name="Copeland A."/>
            <person name="Lucas S."/>
            <person name="Lapidus A."/>
            <person name="Barry K."/>
            <person name="Glavina del Rio T."/>
            <person name="Dalin E."/>
            <person name="Tice H."/>
            <person name="Pitluck S."/>
            <person name="Chain P."/>
            <person name="Malfatti S."/>
            <person name="Shin M."/>
            <person name="Vergez L."/>
            <person name="Schmutz J."/>
            <person name="Larimer F."/>
            <person name="Land M."/>
            <person name="Hauser L."/>
            <person name="Kyrpides N."/>
            <person name="Kim E."/>
            <person name="Brettar I."/>
            <person name="Rodrigues J."/>
            <person name="Konstantinidis K."/>
            <person name="Klappenbach J."/>
            <person name="Hofle M."/>
            <person name="Tiedje J."/>
            <person name="Richardson P."/>
        </authorList>
    </citation>
    <scope>NUCLEOTIDE SEQUENCE [LARGE SCALE GENOMIC DNA]</scope>
    <source>
        <strain>OS195</strain>
    </source>
</reference>
<organism>
    <name type="scientific">Shewanella baltica (strain OS195)</name>
    <dbReference type="NCBI Taxonomy" id="399599"/>
    <lineage>
        <taxon>Bacteria</taxon>
        <taxon>Pseudomonadati</taxon>
        <taxon>Pseudomonadota</taxon>
        <taxon>Gammaproteobacteria</taxon>
        <taxon>Alteromonadales</taxon>
        <taxon>Shewanellaceae</taxon>
        <taxon>Shewanella</taxon>
    </lineage>
</organism>
<keyword id="KW-0028">Amino-acid biosynthesis</keyword>
<keyword id="KW-0963">Cytoplasm</keyword>
<keyword id="KW-0368">Histidine biosynthesis</keyword>
<keyword id="KW-0413">Isomerase</keyword>